<protein>
    <recommendedName>
        <fullName evidence="2">Adenylosuccinate synthetase</fullName>
        <shortName evidence="2">AMPSase</shortName>
        <shortName evidence="2">AdSS</shortName>
        <ecNumber evidence="2">6.3.4.4</ecNumber>
    </recommendedName>
    <alternativeName>
        <fullName evidence="2">IMP--aspartate ligase</fullName>
    </alternativeName>
</protein>
<name>PURA_SALTI</name>
<accession>P65883</accession>
<accession>Q8XGP1</accession>
<feature type="initiator methionine" description="Removed" evidence="1">
    <location>
        <position position="1"/>
    </location>
</feature>
<feature type="chain" id="PRO_0000095222" description="Adenylosuccinate synthetase">
    <location>
        <begin position="2"/>
        <end position="432"/>
    </location>
</feature>
<feature type="active site" description="Proton acceptor" evidence="2">
    <location>
        <position position="14"/>
    </location>
</feature>
<feature type="active site" description="Proton donor" evidence="2">
    <location>
        <position position="42"/>
    </location>
</feature>
<feature type="binding site" evidence="2">
    <location>
        <begin position="13"/>
        <end position="19"/>
    </location>
    <ligand>
        <name>GTP</name>
        <dbReference type="ChEBI" id="CHEBI:37565"/>
    </ligand>
</feature>
<feature type="binding site" description="in other chain" evidence="2">
    <location>
        <begin position="14"/>
        <end position="17"/>
    </location>
    <ligand>
        <name>IMP</name>
        <dbReference type="ChEBI" id="CHEBI:58053"/>
        <note>ligand shared between dimeric partners</note>
    </ligand>
</feature>
<feature type="binding site" evidence="2">
    <location>
        <position position="14"/>
    </location>
    <ligand>
        <name>Mg(2+)</name>
        <dbReference type="ChEBI" id="CHEBI:18420"/>
    </ligand>
</feature>
<feature type="binding site" description="in other chain" evidence="2">
    <location>
        <begin position="39"/>
        <end position="42"/>
    </location>
    <ligand>
        <name>IMP</name>
        <dbReference type="ChEBI" id="CHEBI:58053"/>
        <note>ligand shared between dimeric partners</note>
    </ligand>
</feature>
<feature type="binding site" evidence="2">
    <location>
        <begin position="41"/>
        <end position="43"/>
    </location>
    <ligand>
        <name>GTP</name>
        <dbReference type="ChEBI" id="CHEBI:37565"/>
    </ligand>
</feature>
<feature type="binding site" evidence="2">
    <location>
        <position position="41"/>
    </location>
    <ligand>
        <name>Mg(2+)</name>
        <dbReference type="ChEBI" id="CHEBI:18420"/>
    </ligand>
</feature>
<feature type="binding site" description="in other chain" evidence="2">
    <location>
        <position position="130"/>
    </location>
    <ligand>
        <name>IMP</name>
        <dbReference type="ChEBI" id="CHEBI:58053"/>
        <note>ligand shared between dimeric partners</note>
    </ligand>
</feature>
<feature type="binding site" evidence="2">
    <location>
        <position position="144"/>
    </location>
    <ligand>
        <name>IMP</name>
        <dbReference type="ChEBI" id="CHEBI:58053"/>
        <note>ligand shared between dimeric partners</note>
    </ligand>
</feature>
<feature type="binding site" description="in other chain" evidence="2">
    <location>
        <position position="225"/>
    </location>
    <ligand>
        <name>IMP</name>
        <dbReference type="ChEBI" id="CHEBI:58053"/>
        <note>ligand shared between dimeric partners</note>
    </ligand>
</feature>
<feature type="binding site" description="in other chain" evidence="2">
    <location>
        <position position="240"/>
    </location>
    <ligand>
        <name>IMP</name>
        <dbReference type="ChEBI" id="CHEBI:58053"/>
        <note>ligand shared between dimeric partners</note>
    </ligand>
</feature>
<feature type="binding site" evidence="2">
    <location>
        <begin position="300"/>
        <end position="306"/>
    </location>
    <ligand>
        <name>substrate</name>
    </ligand>
</feature>
<feature type="binding site" description="in other chain" evidence="2">
    <location>
        <position position="304"/>
    </location>
    <ligand>
        <name>IMP</name>
        <dbReference type="ChEBI" id="CHEBI:58053"/>
        <note>ligand shared between dimeric partners</note>
    </ligand>
</feature>
<feature type="binding site" evidence="2">
    <location>
        <position position="306"/>
    </location>
    <ligand>
        <name>GTP</name>
        <dbReference type="ChEBI" id="CHEBI:37565"/>
    </ligand>
</feature>
<feature type="binding site" evidence="2">
    <location>
        <begin position="332"/>
        <end position="334"/>
    </location>
    <ligand>
        <name>GTP</name>
        <dbReference type="ChEBI" id="CHEBI:37565"/>
    </ligand>
</feature>
<feature type="binding site" evidence="2">
    <location>
        <begin position="415"/>
        <end position="417"/>
    </location>
    <ligand>
        <name>GTP</name>
        <dbReference type="ChEBI" id="CHEBI:37565"/>
    </ligand>
</feature>
<evidence type="ECO:0000250" key="1"/>
<evidence type="ECO:0000255" key="2">
    <source>
        <dbReference type="HAMAP-Rule" id="MF_00011"/>
    </source>
</evidence>
<comment type="function">
    <text evidence="2">Plays an important role in the de novo pathway of purine nucleotide biosynthesis. Catalyzes the first committed step in the biosynthesis of AMP from IMP.</text>
</comment>
<comment type="catalytic activity">
    <reaction evidence="2">
        <text>IMP + L-aspartate + GTP = N(6)-(1,2-dicarboxyethyl)-AMP + GDP + phosphate + 2 H(+)</text>
        <dbReference type="Rhea" id="RHEA:15753"/>
        <dbReference type="ChEBI" id="CHEBI:15378"/>
        <dbReference type="ChEBI" id="CHEBI:29991"/>
        <dbReference type="ChEBI" id="CHEBI:37565"/>
        <dbReference type="ChEBI" id="CHEBI:43474"/>
        <dbReference type="ChEBI" id="CHEBI:57567"/>
        <dbReference type="ChEBI" id="CHEBI:58053"/>
        <dbReference type="ChEBI" id="CHEBI:58189"/>
        <dbReference type="EC" id="6.3.4.4"/>
    </reaction>
</comment>
<comment type="cofactor">
    <cofactor evidence="2">
        <name>Mg(2+)</name>
        <dbReference type="ChEBI" id="CHEBI:18420"/>
    </cofactor>
    <text evidence="2">Binds 1 Mg(2+) ion per subunit.</text>
</comment>
<comment type="pathway">
    <text evidence="2">Purine metabolism; AMP biosynthesis via de novo pathway; AMP from IMP: step 1/2.</text>
</comment>
<comment type="subunit">
    <text evidence="2">Homodimer.</text>
</comment>
<comment type="subcellular location">
    <subcellularLocation>
        <location evidence="2">Cytoplasm</location>
    </subcellularLocation>
</comment>
<comment type="similarity">
    <text evidence="2">Belongs to the adenylosuccinate synthetase family.</text>
</comment>
<organism>
    <name type="scientific">Salmonella typhi</name>
    <dbReference type="NCBI Taxonomy" id="90370"/>
    <lineage>
        <taxon>Bacteria</taxon>
        <taxon>Pseudomonadati</taxon>
        <taxon>Pseudomonadota</taxon>
        <taxon>Gammaproteobacteria</taxon>
        <taxon>Enterobacterales</taxon>
        <taxon>Enterobacteriaceae</taxon>
        <taxon>Salmonella</taxon>
    </lineage>
</organism>
<sequence length="432" mass="47377">MGNNVVVLGTQWGDEGKGKIVDLLTERAKYVVRYQGGHNAGHTLVINGEKTVLHLIPSGILRENVTSIIGNGVVLSPSALMKEMKELEDRGIPVRERLLLSEACPLILDYHVALDNAREKARGAKAIGTTGRGIGPAYEDKVARRGLRVGDLFDKETFAEKLKEVMEYHNFQLVNYYKAEAVDYQKVLDDTMAVADILTSMVVDVSDLLDQARQRGDFVMFEGAQGTLLDIDHGTYPYVTSSNTTAGGVATGSGLGPRYVDYVLGILKAYSTRVGAGPFPTELFDETGEFLCKQGNEYGATTGRRRRTGWLDTVAVRRAVQLNSLSGFCLTKLDVLDGLKEVKLCVAYRMPDGREVTTTPLAADDWKGVEPIYETMPGWSESTFGVKDRSGLPQAALNYIKRIEELTGVPIDIISTGPDRTETMILRDPFDA</sequence>
<gene>
    <name evidence="2" type="primary">purA</name>
    <name type="ordered locus">STY4723</name>
    <name type="ordered locus">t4417</name>
</gene>
<keyword id="KW-0963">Cytoplasm</keyword>
<keyword id="KW-0342">GTP-binding</keyword>
<keyword id="KW-0436">Ligase</keyword>
<keyword id="KW-0460">Magnesium</keyword>
<keyword id="KW-0479">Metal-binding</keyword>
<keyword id="KW-0547">Nucleotide-binding</keyword>
<keyword id="KW-0658">Purine biosynthesis</keyword>
<dbReference type="EC" id="6.3.4.4" evidence="2"/>
<dbReference type="EMBL" id="AL513382">
    <property type="protein sequence ID" value="CAD06843.1"/>
    <property type="molecule type" value="Genomic_DNA"/>
</dbReference>
<dbReference type="EMBL" id="AE014613">
    <property type="protein sequence ID" value="AAO71866.1"/>
    <property type="molecule type" value="Genomic_DNA"/>
</dbReference>
<dbReference type="RefSeq" id="NP_458802.1">
    <property type="nucleotide sequence ID" value="NC_003198.1"/>
</dbReference>
<dbReference type="RefSeq" id="WP_000527972.1">
    <property type="nucleotide sequence ID" value="NZ_WSUR01000012.1"/>
</dbReference>
<dbReference type="SMR" id="P65883"/>
<dbReference type="STRING" id="220341.gene:17588543"/>
<dbReference type="KEGG" id="stt:t4417"/>
<dbReference type="KEGG" id="sty:STY4723"/>
<dbReference type="PATRIC" id="fig|220341.7.peg.4824"/>
<dbReference type="eggNOG" id="COG0104">
    <property type="taxonomic scope" value="Bacteria"/>
</dbReference>
<dbReference type="HOGENOM" id="CLU_029848_0_0_6"/>
<dbReference type="OMA" id="FHHAKPI"/>
<dbReference type="OrthoDB" id="9807553at2"/>
<dbReference type="UniPathway" id="UPA00075">
    <property type="reaction ID" value="UER00335"/>
</dbReference>
<dbReference type="Proteomes" id="UP000000541">
    <property type="component" value="Chromosome"/>
</dbReference>
<dbReference type="Proteomes" id="UP000002670">
    <property type="component" value="Chromosome"/>
</dbReference>
<dbReference type="GO" id="GO:0005737">
    <property type="term" value="C:cytoplasm"/>
    <property type="evidence" value="ECO:0007669"/>
    <property type="project" value="UniProtKB-SubCell"/>
</dbReference>
<dbReference type="GO" id="GO:0004019">
    <property type="term" value="F:adenylosuccinate synthase activity"/>
    <property type="evidence" value="ECO:0007669"/>
    <property type="project" value="UniProtKB-UniRule"/>
</dbReference>
<dbReference type="GO" id="GO:0005525">
    <property type="term" value="F:GTP binding"/>
    <property type="evidence" value="ECO:0007669"/>
    <property type="project" value="UniProtKB-UniRule"/>
</dbReference>
<dbReference type="GO" id="GO:0000287">
    <property type="term" value="F:magnesium ion binding"/>
    <property type="evidence" value="ECO:0007669"/>
    <property type="project" value="UniProtKB-UniRule"/>
</dbReference>
<dbReference type="GO" id="GO:0044208">
    <property type="term" value="P:'de novo' AMP biosynthetic process"/>
    <property type="evidence" value="ECO:0007669"/>
    <property type="project" value="UniProtKB-UniRule"/>
</dbReference>
<dbReference type="GO" id="GO:0046040">
    <property type="term" value="P:IMP metabolic process"/>
    <property type="evidence" value="ECO:0007669"/>
    <property type="project" value="TreeGrafter"/>
</dbReference>
<dbReference type="CDD" id="cd03108">
    <property type="entry name" value="AdSS"/>
    <property type="match status" value="1"/>
</dbReference>
<dbReference type="FunFam" id="1.10.300.10:FF:000001">
    <property type="entry name" value="Adenylosuccinate synthetase"/>
    <property type="match status" value="1"/>
</dbReference>
<dbReference type="FunFam" id="3.90.170.10:FF:000001">
    <property type="entry name" value="Adenylosuccinate synthetase"/>
    <property type="match status" value="1"/>
</dbReference>
<dbReference type="Gene3D" id="3.40.440.10">
    <property type="entry name" value="Adenylosuccinate Synthetase, subunit A, domain 1"/>
    <property type="match status" value="1"/>
</dbReference>
<dbReference type="Gene3D" id="1.10.300.10">
    <property type="entry name" value="Adenylosuccinate Synthetase, subunit A, domain 2"/>
    <property type="match status" value="1"/>
</dbReference>
<dbReference type="Gene3D" id="3.90.170.10">
    <property type="entry name" value="Adenylosuccinate Synthetase, subunit A, domain 3"/>
    <property type="match status" value="1"/>
</dbReference>
<dbReference type="HAMAP" id="MF_00011">
    <property type="entry name" value="Adenylosucc_synth"/>
    <property type="match status" value="1"/>
</dbReference>
<dbReference type="InterPro" id="IPR018220">
    <property type="entry name" value="Adenylosuccin_syn_GTP-bd"/>
</dbReference>
<dbReference type="InterPro" id="IPR033128">
    <property type="entry name" value="Adenylosuccin_syn_Lys_AS"/>
</dbReference>
<dbReference type="InterPro" id="IPR042109">
    <property type="entry name" value="Adenylosuccinate_synth_dom1"/>
</dbReference>
<dbReference type="InterPro" id="IPR042110">
    <property type="entry name" value="Adenylosuccinate_synth_dom2"/>
</dbReference>
<dbReference type="InterPro" id="IPR042111">
    <property type="entry name" value="Adenylosuccinate_synth_dom3"/>
</dbReference>
<dbReference type="InterPro" id="IPR001114">
    <property type="entry name" value="Adenylosuccinate_synthetase"/>
</dbReference>
<dbReference type="InterPro" id="IPR027417">
    <property type="entry name" value="P-loop_NTPase"/>
</dbReference>
<dbReference type="NCBIfam" id="NF002223">
    <property type="entry name" value="PRK01117.1"/>
    <property type="match status" value="1"/>
</dbReference>
<dbReference type="NCBIfam" id="TIGR00184">
    <property type="entry name" value="purA"/>
    <property type="match status" value="1"/>
</dbReference>
<dbReference type="PANTHER" id="PTHR11846">
    <property type="entry name" value="ADENYLOSUCCINATE SYNTHETASE"/>
    <property type="match status" value="1"/>
</dbReference>
<dbReference type="PANTHER" id="PTHR11846:SF0">
    <property type="entry name" value="ADENYLOSUCCINATE SYNTHETASE"/>
    <property type="match status" value="1"/>
</dbReference>
<dbReference type="Pfam" id="PF00709">
    <property type="entry name" value="Adenylsucc_synt"/>
    <property type="match status" value="1"/>
</dbReference>
<dbReference type="SMART" id="SM00788">
    <property type="entry name" value="Adenylsucc_synt"/>
    <property type="match status" value="1"/>
</dbReference>
<dbReference type="SUPFAM" id="SSF52540">
    <property type="entry name" value="P-loop containing nucleoside triphosphate hydrolases"/>
    <property type="match status" value="1"/>
</dbReference>
<dbReference type="PROSITE" id="PS01266">
    <property type="entry name" value="ADENYLOSUCCIN_SYN_1"/>
    <property type="match status" value="1"/>
</dbReference>
<dbReference type="PROSITE" id="PS00513">
    <property type="entry name" value="ADENYLOSUCCIN_SYN_2"/>
    <property type="match status" value="1"/>
</dbReference>
<reference key="1">
    <citation type="journal article" date="2001" name="Nature">
        <title>Complete genome sequence of a multiple drug resistant Salmonella enterica serovar Typhi CT18.</title>
        <authorList>
            <person name="Parkhill J."/>
            <person name="Dougan G."/>
            <person name="James K.D."/>
            <person name="Thomson N.R."/>
            <person name="Pickard D."/>
            <person name="Wain J."/>
            <person name="Churcher C.M."/>
            <person name="Mungall K.L."/>
            <person name="Bentley S.D."/>
            <person name="Holden M.T.G."/>
            <person name="Sebaihia M."/>
            <person name="Baker S."/>
            <person name="Basham D."/>
            <person name="Brooks K."/>
            <person name="Chillingworth T."/>
            <person name="Connerton P."/>
            <person name="Cronin A."/>
            <person name="Davis P."/>
            <person name="Davies R.M."/>
            <person name="Dowd L."/>
            <person name="White N."/>
            <person name="Farrar J."/>
            <person name="Feltwell T."/>
            <person name="Hamlin N."/>
            <person name="Haque A."/>
            <person name="Hien T.T."/>
            <person name="Holroyd S."/>
            <person name="Jagels K."/>
            <person name="Krogh A."/>
            <person name="Larsen T.S."/>
            <person name="Leather S."/>
            <person name="Moule S."/>
            <person name="O'Gaora P."/>
            <person name="Parry C."/>
            <person name="Quail M.A."/>
            <person name="Rutherford K.M."/>
            <person name="Simmonds M."/>
            <person name="Skelton J."/>
            <person name="Stevens K."/>
            <person name="Whitehead S."/>
            <person name="Barrell B.G."/>
        </authorList>
    </citation>
    <scope>NUCLEOTIDE SEQUENCE [LARGE SCALE GENOMIC DNA]</scope>
    <source>
        <strain>CT18</strain>
    </source>
</reference>
<reference key="2">
    <citation type="journal article" date="2003" name="J. Bacteriol.">
        <title>Comparative genomics of Salmonella enterica serovar Typhi strains Ty2 and CT18.</title>
        <authorList>
            <person name="Deng W."/>
            <person name="Liou S.-R."/>
            <person name="Plunkett G. III"/>
            <person name="Mayhew G.F."/>
            <person name="Rose D.J."/>
            <person name="Burland V."/>
            <person name="Kodoyianni V."/>
            <person name="Schwartz D.C."/>
            <person name="Blattner F.R."/>
        </authorList>
    </citation>
    <scope>NUCLEOTIDE SEQUENCE [LARGE SCALE GENOMIC DNA]</scope>
    <source>
        <strain>ATCC 700931 / Ty2</strain>
    </source>
</reference>
<proteinExistence type="inferred from homology"/>